<dbReference type="EMBL" id="HF679033">
    <property type="protein sequence ID" value="CCT75704.1"/>
    <property type="molecule type" value="Genomic_DNA"/>
</dbReference>
<dbReference type="SMR" id="S0ENM8"/>
<dbReference type="STRING" id="1279085.S0ENM8"/>
<dbReference type="EnsemblFungi" id="CCT75704">
    <property type="protein sequence ID" value="CCT75704"/>
    <property type="gene ID" value="FFUJ_11739"/>
</dbReference>
<dbReference type="KEGG" id="ag:CCT75704"/>
<dbReference type="VEuPathDB" id="FungiDB:FFUJ_11739"/>
<dbReference type="HOGENOM" id="CLU_042538_0_1_1"/>
<dbReference type="BRENDA" id="4.2.3.165">
    <property type="organism ID" value="2425"/>
</dbReference>
<dbReference type="Proteomes" id="UP000016800">
    <property type="component" value="Chromosome 11"/>
</dbReference>
<dbReference type="GO" id="GO:0046872">
    <property type="term" value="F:metal ion binding"/>
    <property type="evidence" value="ECO:0007669"/>
    <property type="project" value="UniProtKB-KW"/>
</dbReference>
<dbReference type="GO" id="GO:0010333">
    <property type="term" value="F:terpene synthase activity"/>
    <property type="evidence" value="ECO:0007669"/>
    <property type="project" value="InterPro"/>
</dbReference>
<dbReference type="GO" id="GO:0008299">
    <property type="term" value="P:isoprenoid biosynthetic process"/>
    <property type="evidence" value="ECO:0007669"/>
    <property type="project" value="UniProtKB-ARBA"/>
</dbReference>
<dbReference type="Gene3D" id="1.10.600.10">
    <property type="entry name" value="Farnesyl Diphosphate Synthase"/>
    <property type="match status" value="1"/>
</dbReference>
<dbReference type="InterPro" id="IPR008949">
    <property type="entry name" value="Isoprenoid_synthase_dom_sf"/>
</dbReference>
<dbReference type="InterPro" id="IPR034686">
    <property type="entry name" value="Terpene_cyclase-like_2"/>
</dbReference>
<dbReference type="PANTHER" id="PTHR35201:SF4">
    <property type="entry name" value="BETA-PINACENE SYNTHASE-RELATED"/>
    <property type="match status" value="1"/>
</dbReference>
<dbReference type="PANTHER" id="PTHR35201">
    <property type="entry name" value="TERPENE SYNTHASE"/>
    <property type="match status" value="1"/>
</dbReference>
<dbReference type="Pfam" id="PF19086">
    <property type="entry name" value="Terpene_syn_C_2"/>
    <property type="match status" value="1"/>
</dbReference>
<dbReference type="SUPFAM" id="SSF48576">
    <property type="entry name" value="Terpenoid synthases"/>
    <property type="match status" value="1"/>
</dbReference>
<protein>
    <recommendedName>
        <fullName evidence="6">Inactive (1R,4R,5S)-(-)-guaia-6,10(14)-diene synthase</fullName>
    </recommendedName>
</protein>
<evidence type="ECO:0000250" key="1">
    <source>
        <dbReference type="UniProtKB" id="B5HDJ6"/>
    </source>
</evidence>
<evidence type="ECO:0000256" key="2">
    <source>
        <dbReference type="SAM" id="MobiDB-lite"/>
    </source>
</evidence>
<evidence type="ECO:0000269" key="3">
    <source>
    </source>
</evidence>
<evidence type="ECO:0000303" key="4">
    <source>
    </source>
</evidence>
<evidence type="ECO:0000305" key="5"/>
<evidence type="ECO:0000305" key="6">
    <source>
    </source>
</evidence>
<evidence type="ECO:0000312" key="7">
    <source>
        <dbReference type="EMBL" id="CCT75704.1"/>
    </source>
</evidence>
<accession>S0ENM8</accession>
<feature type="chain" id="PRO_0000443321" description="Inactive (1R,4R,5S)-(-)-guaia-6,10(14)-diene synthase">
    <location>
        <begin position="1"/>
        <end position="401"/>
    </location>
</feature>
<feature type="region of interest" description="Disordered" evidence="2">
    <location>
        <begin position="1"/>
        <end position="20"/>
    </location>
</feature>
<feature type="short sequence motif" description="DDXXD motif" evidence="6">
    <location>
        <begin position="134"/>
        <end position="138"/>
    </location>
</feature>
<feature type="binding site" evidence="1">
    <location>
        <position position="134"/>
    </location>
    <ligand>
        <name>Mg(2+)</name>
        <dbReference type="ChEBI" id="CHEBI:18420"/>
        <label>1</label>
    </ligand>
</feature>
<feature type="binding site" evidence="1">
    <location>
        <position position="139"/>
    </location>
    <ligand>
        <name>Mg(2+)</name>
        <dbReference type="ChEBI" id="CHEBI:18420"/>
        <label>1</label>
    </ligand>
</feature>
<feature type="binding site" evidence="1">
    <location>
        <position position="139"/>
    </location>
    <ligand>
        <name>Mg(2+)</name>
        <dbReference type="ChEBI" id="CHEBI:18420"/>
        <label>2</label>
    </ligand>
</feature>
<feature type="binding site" evidence="1">
    <location>
        <position position="242"/>
    </location>
    <ligand>
        <name>substrate</name>
    </ligand>
</feature>
<feature type="binding site" evidence="1">
    <location>
        <position position="292"/>
    </location>
    <ligand>
        <name>Mg(2+)</name>
        <dbReference type="ChEBI" id="CHEBI:18420"/>
        <label>3</label>
    </ligand>
</feature>
<feature type="binding site" evidence="1">
    <location>
        <position position="295"/>
    </location>
    <ligand>
        <name>substrate</name>
    </ligand>
</feature>
<feature type="binding site" evidence="1">
    <location>
        <position position="296"/>
    </location>
    <ligand>
        <name>Mg(2+)</name>
        <dbReference type="ChEBI" id="CHEBI:18420"/>
        <label>3</label>
    </ligand>
</feature>
<feature type="binding site" evidence="1">
    <location>
        <begin position="375"/>
        <end position="376"/>
    </location>
    <ligand>
        <name>substrate</name>
    </ligand>
</feature>
<feature type="mutagenesis site" description="Restores (1R,4R,5S)-(-)-guaia-6,10(14)-diene synthase activity." evidence="3">
    <original>K</original>
    <variation>N</variation>
    <location>
        <position position="288"/>
    </location>
</feature>
<reference key="1">
    <citation type="journal article" date="2013" name="PLoS Pathog.">
        <title>Deciphering the cryptic genome: genome-wide analyses of the rice pathogen Fusarium fujikuroi reveal complex regulation of secondary metabolism and novel metabolites.</title>
        <authorList>
            <person name="Wiemann P."/>
            <person name="Sieber C.M.K."/>
            <person name="von Bargen K.W."/>
            <person name="Studt L."/>
            <person name="Niehaus E.-M."/>
            <person name="Espino J.J."/>
            <person name="Huss K."/>
            <person name="Michielse C.B."/>
            <person name="Albermann S."/>
            <person name="Wagner D."/>
            <person name="Bergner S.V."/>
            <person name="Connolly L.R."/>
            <person name="Fischer A."/>
            <person name="Reuter G."/>
            <person name="Kleigrewe K."/>
            <person name="Bald T."/>
            <person name="Wingfield B.D."/>
            <person name="Ophir R."/>
            <person name="Freeman S."/>
            <person name="Hippler M."/>
            <person name="Smith K.M."/>
            <person name="Brown D.W."/>
            <person name="Proctor R.H."/>
            <person name="Muensterkoetter M."/>
            <person name="Freitag M."/>
            <person name="Humpf H.-U."/>
            <person name="Gueldener U."/>
            <person name="Tudzynski B."/>
        </authorList>
    </citation>
    <scope>NUCLEOTIDE SEQUENCE [LARGE SCALE GENOMIC DNA]</scope>
    <source>
        <strain>CBS 195.34 / IMI 58289 / NRRL A-6831</strain>
    </source>
</reference>
<reference key="2">
    <citation type="journal article" date="2016" name="Angew. Chem. Int. Ed.">
        <title>Mechanistic characterisation of two sesquiterpene cyclases from the plant pathogenic fungus Fusarium fujikuroi.</title>
        <authorList>
            <person name="Burkhardt I."/>
            <person name="Siemon T."/>
            <person name="Henrot M."/>
            <person name="Studt L."/>
            <person name="Roesler S."/>
            <person name="Tudzynski B."/>
            <person name="Christmann M."/>
            <person name="Dickschat J.S."/>
        </authorList>
    </citation>
    <scope>MUTAGENESIS OF LYS-288</scope>
    <scope>DOMAIN</scope>
</reference>
<gene>
    <name evidence="4" type="primary">STC5</name>
    <name evidence="7" type="ORF">FFUJ_11739</name>
</gene>
<comment type="cofactor">
    <cofactor evidence="1">
        <name>Mg(2+)</name>
        <dbReference type="ChEBI" id="CHEBI:18420"/>
    </cofactor>
    <text evidence="1">Binds 3 Mg(2+) ions per subunit.</text>
</comment>
<comment type="domain">
    <text evidence="6">The Asp-Asp-Xaa-Xaa-Asp (DDXXD) motif is important for the catalytic activity, presumably through binding to Mg(2+).</text>
</comment>
<comment type="similarity">
    <text evidence="5">Belongs to the terpene synthase family.</text>
</comment>
<comment type="caution">
    <text evidence="3">Although similar to (1R,4R,5S)-(-)-guaia-6,10(14)-diene synthase, lacks the metal binding site Asn at position 288 and does not show (1R,4R,5S)-(-)-guaia-6,10(14)-diene synthase activity. Converting Lys-288 to a asparagine restores activity.</text>
</comment>
<keyword id="KW-0460">Magnesium</keyword>
<keyword id="KW-0479">Metal-binding</keyword>
<keyword id="KW-1185">Reference proteome</keyword>
<name>GUDIS_GIBF5</name>
<organism>
    <name type="scientific">Gibberella fujikuroi (strain CBS 195.34 / IMI 58289 / NRRL A-6831)</name>
    <name type="common">Bakanae and foot rot disease fungus</name>
    <name type="synonym">Fusarium fujikuroi</name>
    <dbReference type="NCBI Taxonomy" id="1279085"/>
    <lineage>
        <taxon>Eukaryota</taxon>
        <taxon>Fungi</taxon>
        <taxon>Dikarya</taxon>
        <taxon>Ascomycota</taxon>
        <taxon>Pezizomycotina</taxon>
        <taxon>Sordariomycetes</taxon>
        <taxon>Hypocreomycetidae</taxon>
        <taxon>Hypocreales</taxon>
        <taxon>Nectriaceae</taxon>
        <taxon>Fusarium</taxon>
        <taxon>Fusarium fujikuroi species complex</taxon>
    </lineage>
</organism>
<proteinExistence type="evidence at protein level"/>
<sequence>MVKFDSGSESEMTNGDELHINSKHEVKSRMANGNGVHNVPDHDQFQDRAEMEVLILPDLFSSLMSVPARENPHYASVKADADEWISFVINADAKWASRNKRVDFTYLASIWAPDCSAFALRTSADWNSWAFLFDDQFDEGHLSNDLEGAINEIARTREIMEGTAPRYTADSEHPIRYVFQTLCDRVKQNPEGFYAGKPSSERFYRRWMWAHELYWEGLVAQVRTNVEGRSFTRGPEEYLAMRRGSLGAYPALVNNEWAYGIDLPEEVADHPLVFEIMIIMSDQILLVKDILSYEKDLRLGVDHNMVRLLKAKGLSTQQAINEVGVMINNCYRRYYRALSELPCFGEEADRALLGYLEVEKNHALGSLLWSYNTGRYFKSKEDGARVRKTRELLIPKKMAAL</sequence>